<accession>Q0VA20</accession>
<dbReference type="EMBL" id="BC121298">
    <property type="protein sequence ID" value="AAI21299.1"/>
    <property type="status" value="ALT_INIT"/>
    <property type="molecule type" value="mRNA"/>
</dbReference>
<dbReference type="RefSeq" id="NP_001119541.1">
    <property type="nucleotide sequence ID" value="NM_001126069.1"/>
</dbReference>
<dbReference type="RefSeq" id="XP_012824033.2">
    <property type="nucleotide sequence ID" value="XM_012968579.3"/>
</dbReference>
<dbReference type="RefSeq" id="XP_012824034.2">
    <property type="nucleotide sequence ID" value="XM_012968580.2"/>
</dbReference>
<dbReference type="RefSeq" id="XP_017951788.2">
    <property type="nucleotide sequence ID" value="XM_018096299.2"/>
</dbReference>
<dbReference type="SMR" id="Q0VA20"/>
<dbReference type="PaxDb" id="8364-ENSXETP00000053352"/>
<dbReference type="GeneID" id="779452"/>
<dbReference type="KEGG" id="xtr:779452"/>
<dbReference type="CTD" id="779452"/>
<dbReference type="eggNOG" id="ENOG502QTTZ">
    <property type="taxonomic scope" value="Eukaryota"/>
</dbReference>
<dbReference type="InParanoid" id="Q0VA20"/>
<dbReference type="OMA" id="NTEPGSC"/>
<dbReference type="OrthoDB" id="6347145at2759"/>
<dbReference type="Proteomes" id="UP000008143">
    <property type="component" value="Chromosome 8"/>
</dbReference>
<dbReference type="InterPro" id="IPR026179">
    <property type="entry name" value="Slain"/>
</dbReference>
<dbReference type="PANTHER" id="PTHR22406">
    <property type="entry name" value="NASCENT POLYPEPTIDE-ASSOCIATED COMPLEX SUBUNIT ALPHA, MUSCLE-SPECIFIC FORM"/>
    <property type="match status" value="1"/>
</dbReference>
<dbReference type="PANTHER" id="PTHR22406:SF5">
    <property type="entry name" value="SLAIN MOTIF-CONTAINING PROTEIN-LIKE"/>
    <property type="match status" value="1"/>
</dbReference>
<dbReference type="Pfam" id="PF15301">
    <property type="entry name" value="SLAIN"/>
    <property type="match status" value="1"/>
</dbReference>
<keyword id="KW-0175">Coiled coil</keyword>
<keyword id="KW-1185">Reference proteome</keyword>
<evidence type="ECO:0000255" key="1"/>
<evidence type="ECO:0000256" key="2">
    <source>
        <dbReference type="SAM" id="MobiDB-lite"/>
    </source>
</evidence>
<evidence type="ECO:0000305" key="3"/>
<reference key="1">
    <citation type="submission" date="2006-08" db="EMBL/GenBank/DDBJ databases">
        <authorList>
            <consortium name="NIH - Xenopus Gene Collection (XGC) project"/>
        </authorList>
    </citation>
    <scope>NUCLEOTIDE SEQUENCE [LARGE SCALE MRNA]</scope>
    <source>
        <tissue>Testis</tissue>
    </source>
</reference>
<name>SLAIL_XENTR</name>
<comment type="similarity">
    <text evidence="3">Belongs to the SLAIN motif-containing family.</text>
</comment>
<comment type="sequence caution" evidence="3">
    <conflict type="erroneous initiation">
        <sequence resource="EMBL-CDS" id="AAI21299"/>
    </conflict>
</comment>
<sequence length="622" mass="68001">MVVPGNSPGIPRDHAIDISDRAMDLEAEPDHSSDLKEVQKLHELVKRLEIQNQQLKIKRNPQSSNIQNISGIDNQLSALNCSGVMNSINIQPEKGDLQKMPNLQSQLEQISSEKENIPALGMDAQMQYEKVCSDSKPGSKVEINCDQDDCCFYSVDGSGRSDLEEAISKMSELNSSGENILDETALDEVDVLELGSCSEDEEDCWLYVSPRKVENAEQKLDSPLKWCRQVLDHHSPETEAACRSLIGKLDQASRWKSLYCSPLASPSAYNTNAECSYGSNTLNSPGCLKSTNKALLTCGSSGYLSFHSALSSQSSVDSELSTSDDSISMGYKLQDLTDVQVMARLQEESLRQDYASSSASVSRRSSSASLHSLRRGTFSDQEFDTYSLEDEDDCDCSLSFRSSHRYSPSPLSSPRCQSPSAAESRATTSRIRPPRRSIQNHVQERMKYANCEDELRHSMPNLAKTSLRSLEAVRSSRSLESDLQGPSSRLTRMQQPSTSTPPSKVRYGASNQPALTVRQPGKPGVSTSSLMTSRQPVKSSGYNNSSGLRKIQSSPGLNPSGSGAVSRTGNASSSIKHSTVKSQASMGSTVPKSKMIQPSRRSLSSAKMNSTLDDDSWKDGCY</sequence>
<feature type="chain" id="PRO_0000316969" description="SLAIN motif-containing protein-like">
    <location>
        <begin position="1"/>
        <end position="622"/>
    </location>
</feature>
<feature type="region of interest" description="Disordered" evidence="2">
    <location>
        <begin position="404"/>
        <end position="441"/>
    </location>
</feature>
<feature type="region of interest" description="Disordered" evidence="2">
    <location>
        <begin position="473"/>
        <end position="622"/>
    </location>
</feature>
<feature type="coiled-coil region" evidence="1">
    <location>
        <begin position="34"/>
        <end position="60"/>
    </location>
</feature>
<feature type="compositionally biased region" description="Low complexity" evidence="2">
    <location>
        <begin position="405"/>
        <end position="415"/>
    </location>
</feature>
<feature type="compositionally biased region" description="Polar residues" evidence="2">
    <location>
        <begin position="416"/>
        <end position="430"/>
    </location>
</feature>
<feature type="compositionally biased region" description="Polar residues" evidence="2">
    <location>
        <begin position="484"/>
        <end position="502"/>
    </location>
</feature>
<feature type="compositionally biased region" description="Polar residues" evidence="2">
    <location>
        <begin position="525"/>
        <end position="591"/>
    </location>
</feature>
<feature type="compositionally biased region" description="Polar residues" evidence="2">
    <location>
        <begin position="599"/>
        <end position="611"/>
    </location>
</feature>
<organism>
    <name type="scientific">Xenopus tropicalis</name>
    <name type="common">Western clawed frog</name>
    <name type="synonym">Silurana tropicalis</name>
    <dbReference type="NCBI Taxonomy" id="8364"/>
    <lineage>
        <taxon>Eukaryota</taxon>
        <taxon>Metazoa</taxon>
        <taxon>Chordata</taxon>
        <taxon>Craniata</taxon>
        <taxon>Vertebrata</taxon>
        <taxon>Euteleostomi</taxon>
        <taxon>Amphibia</taxon>
        <taxon>Batrachia</taxon>
        <taxon>Anura</taxon>
        <taxon>Pipoidea</taxon>
        <taxon>Pipidae</taxon>
        <taxon>Xenopodinae</taxon>
        <taxon>Xenopus</taxon>
        <taxon>Silurana</taxon>
    </lineage>
</organism>
<proteinExistence type="evidence at transcript level"/>
<protein>
    <recommendedName>
        <fullName>SLAIN motif-containing protein-like</fullName>
    </recommendedName>
</protein>